<sequence>MSRLTSTFQVLRHANRKALIPFITAGDPEPGFTVPVMHAMVEAGADVIELGVPFSDPMADGPVIQKASERALVHHMSLGKTLDLVAEFRRADRTTPIVLMGYLNPVECMGYQRFVDRAKDAGVDGVLTVDMPPEEAGEFVPMLHRAGLDPIFLLAPNSSDARVQRMAALGRGYLYYVSLKGVTGASHLDLAEVESRIAHIRSLTDLPIGVGFGVKNAETAAAIGRFADAVVVGSALVEKIAAAQDRPEQARKDIVDLLAVMRRALDA</sequence>
<name>TRPA_METCA</name>
<reference key="1">
    <citation type="journal article" date="2004" name="PLoS Biol.">
        <title>Genomic insights into methanotrophy: the complete genome sequence of Methylococcus capsulatus (Bath).</title>
        <authorList>
            <person name="Ward N.L."/>
            <person name="Larsen O."/>
            <person name="Sakwa J."/>
            <person name="Bruseth L."/>
            <person name="Khouri H.M."/>
            <person name="Durkin A.S."/>
            <person name="Dimitrov G."/>
            <person name="Jiang L."/>
            <person name="Scanlan D."/>
            <person name="Kang K.H."/>
            <person name="Lewis M.R."/>
            <person name="Nelson K.E."/>
            <person name="Methe B.A."/>
            <person name="Wu M."/>
            <person name="Heidelberg J.F."/>
            <person name="Paulsen I.T."/>
            <person name="Fouts D.E."/>
            <person name="Ravel J."/>
            <person name="Tettelin H."/>
            <person name="Ren Q."/>
            <person name="Read T.D."/>
            <person name="DeBoy R.T."/>
            <person name="Seshadri R."/>
            <person name="Salzberg S.L."/>
            <person name="Jensen H.B."/>
            <person name="Birkeland N.K."/>
            <person name="Nelson W.C."/>
            <person name="Dodson R.J."/>
            <person name="Grindhaug S.H."/>
            <person name="Holt I.E."/>
            <person name="Eidhammer I."/>
            <person name="Jonasen I."/>
            <person name="Vanaken S."/>
            <person name="Utterback T.R."/>
            <person name="Feldblyum T.V."/>
            <person name="Fraser C.M."/>
            <person name="Lillehaug J.R."/>
            <person name="Eisen J.A."/>
        </authorList>
    </citation>
    <scope>NUCLEOTIDE SEQUENCE [LARGE SCALE GENOMIC DNA]</scope>
    <source>
        <strain>ATCC 33009 / NCIMB 11132 / Bath</strain>
    </source>
</reference>
<organism>
    <name type="scientific">Methylococcus capsulatus (strain ATCC 33009 / NCIMB 11132 / Bath)</name>
    <dbReference type="NCBI Taxonomy" id="243233"/>
    <lineage>
        <taxon>Bacteria</taxon>
        <taxon>Pseudomonadati</taxon>
        <taxon>Pseudomonadota</taxon>
        <taxon>Gammaproteobacteria</taxon>
        <taxon>Methylococcales</taxon>
        <taxon>Methylococcaceae</taxon>
        <taxon>Methylococcus</taxon>
    </lineage>
</organism>
<gene>
    <name evidence="1" type="primary">trpA</name>
    <name type="ordered locus">MCA2494</name>
</gene>
<accession>Q604P4</accession>
<comment type="function">
    <text evidence="1">The alpha subunit is responsible for the aldol cleavage of indoleglycerol phosphate to indole and glyceraldehyde 3-phosphate.</text>
</comment>
<comment type="catalytic activity">
    <reaction evidence="1">
        <text>(1S,2R)-1-C-(indol-3-yl)glycerol 3-phosphate + L-serine = D-glyceraldehyde 3-phosphate + L-tryptophan + H2O</text>
        <dbReference type="Rhea" id="RHEA:10532"/>
        <dbReference type="ChEBI" id="CHEBI:15377"/>
        <dbReference type="ChEBI" id="CHEBI:33384"/>
        <dbReference type="ChEBI" id="CHEBI:57912"/>
        <dbReference type="ChEBI" id="CHEBI:58866"/>
        <dbReference type="ChEBI" id="CHEBI:59776"/>
        <dbReference type="EC" id="4.2.1.20"/>
    </reaction>
</comment>
<comment type="pathway">
    <text evidence="1">Amino-acid biosynthesis; L-tryptophan biosynthesis; L-tryptophan from chorismate: step 5/5.</text>
</comment>
<comment type="subunit">
    <text evidence="1">Tetramer of two alpha and two beta chains.</text>
</comment>
<comment type="similarity">
    <text evidence="1">Belongs to the TrpA family.</text>
</comment>
<proteinExistence type="inferred from homology"/>
<keyword id="KW-0028">Amino-acid biosynthesis</keyword>
<keyword id="KW-0057">Aromatic amino acid biosynthesis</keyword>
<keyword id="KW-0456">Lyase</keyword>
<keyword id="KW-1185">Reference proteome</keyword>
<keyword id="KW-0822">Tryptophan biosynthesis</keyword>
<feature type="chain" id="PRO_0000098807" description="Tryptophan synthase alpha chain">
    <location>
        <begin position="1"/>
        <end position="267"/>
    </location>
</feature>
<feature type="active site" description="Proton acceptor" evidence="1">
    <location>
        <position position="49"/>
    </location>
</feature>
<feature type="active site" description="Proton acceptor" evidence="1">
    <location>
        <position position="60"/>
    </location>
</feature>
<protein>
    <recommendedName>
        <fullName evidence="1">Tryptophan synthase alpha chain</fullName>
        <ecNumber evidence="1">4.2.1.20</ecNumber>
    </recommendedName>
</protein>
<evidence type="ECO:0000255" key="1">
    <source>
        <dbReference type="HAMAP-Rule" id="MF_00131"/>
    </source>
</evidence>
<dbReference type="EC" id="4.2.1.20" evidence="1"/>
<dbReference type="EMBL" id="AE017282">
    <property type="protein sequence ID" value="AAU91371.1"/>
    <property type="molecule type" value="Genomic_DNA"/>
</dbReference>
<dbReference type="RefSeq" id="WP_010961717.1">
    <property type="nucleotide sequence ID" value="NC_002977.6"/>
</dbReference>
<dbReference type="SMR" id="Q604P4"/>
<dbReference type="STRING" id="243233.MCA2494"/>
<dbReference type="GeneID" id="88224692"/>
<dbReference type="KEGG" id="mca:MCA2494"/>
<dbReference type="eggNOG" id="COG0159">
    <property type="taxonomic scope" value="Bacteria"/>
</dbReference>
<dbReference type="HOGENOM" id="CLU_016734_0_4_6"/>
<dbReference type="UniPathway" id="UPA00035">
    <property type="reaction ID" value="UER00044"/>
</dbReference>
<dbReference type="Proteomes" id="UP000006821">
    <property type="component" value="Chromosome"/>
</dbReference>
<dbReference type="GO" id="GO:0005829">
    <property type="term" value="C:cytosol"/>
    <property type="evidence" value="ECO:0007669"/>
    <property type="project" value="TreeGrafter"/>
</dbReference>
<dbReference type="GO" id="GO:0004834">
    <property type="term" value="F:tryptophan synthase activity"/>
    <property type="evidence" value="ECO:0007669"/>
    <property type="project" value="UniProtKB-UniRule"/>
</dbReference>
<dbReference type="CDD" id="cd04724">
    <property type="entry name" value="Tryptophan_synthase_alpha"/>
    <property type="match status" value="1"/>
</dbReference>
<dbReference type="FunFam" id="3.20.20.70:FF:000037">
    <property type="entry name" value="Tryptophan synthase alpha chain"/>
    <property type="match status" value="1"/>
</dbReference>
<dbReference type="Gene3D" id="3.20.20.70">
    <property type="entry name" value="Aldolase class I"/>
    <property type="match status" value="1"/>
</dbReference>
<dbReference type="HAMAP" id="MF_00131">
    <property type="entry name" value="Trp_synth_alpha"/>
    <property type="match status" value="1"/>
</dbReference>
<dbReference type="InterPro" id="IPR013785">
    <property type="entry name" value="Aldolase_TIM"/>
</dbReference>
<dbReference type="InterPro" id="IPR011060">
    <property type="entry name" value="RibuloseP-bd_barrel"/>
</dbReference>
<dbReference type="InterPro" id="IPR018204">
    <property type="entry name" value="Trp_synthase_alpha_AS"/>
</dbReference>
<dbReference type="InterPro" id="IPR002028">
    <property type="entry name" value="Trp_synthase_suA"/>
</dbReference>
<dbReference type="NCBIfam" id="TIGR00262">
    <property type="entry name" value="trpA"/>
    <property type="match status" value="1"/>
</dbReference>
<dbReference type="PANTHER" id="PTHR43406:SF1">
    <property type="entry name" value="TRYPTOPHAN SYNTHASE ALPHA CHAIN, CHLOROPLASTIC"/>
    <property type="match status" value="1"/>
</dbReference>
<dbReference type="PANTHER" id="PTHR43406">
    <property type="entry name" value="TRYPTOPHAN SYNTHASE, ALPHA CHAIN"/>
    <property type="match status" value="1"/>
</dbReference>
<dbReference type="Pfam" id="PF00290">
    <property type="entry name" value="Trp_syntA"/>
    <property type="match status" value="1"/>
</dbReference>
<dbReference type="SUPFAM" id="SSF51366">
    <property type="entry name" value="Ribulose-phoshate binding barrel"/>
    <property type="match status" value="1"/>
</dbReference>
<dbReference type="PROSITE" id="PS00167">
    <property type="entry name" value="TRP_SYNTHASE_ALPHA"/>
    <property type="match status" value="1"/>
</dbReference>